<feature type="signal peptide" evidence="4">
    <location>
        <begin position="1"/>
        <end position="43"/>
    </location>
</feature>
<feature type="chain" id="PRO_0000343660" description="Nuclear envelope integral membrane protein 1">
    <location>
        <begin position="44"/>
        <end position="444"/>
    </location>
</feature>
<feature type="transmembrane region" description="Helical" evidence="4">
    <location>
        <begin position="161"/>
        <end position="181"/>
    </location>
</feature>
<feature type="transmembrane region" description="Helical" evidence="4">
    <location>
        <begin position="186"/>
        <end position="206"/>
    </location>
</feature>
<feature type="transmembrane region" description="Helical" evidence="4">
    <location>
        <begin position="216"/>
        <end position="236"/>
    </location>
</feature>
<feature type="transmembrane region" description="Helical" evidence="4">
    <location>
        <begin position="245"/>
        <end position="265"/>
    </location>
</feature>
<feature type="transmembrane region" description="Helical" evidence="4">
    <location>
        <begin position="289"/>
        <end position="309"/>
    </location>
</feature>
<feature type="region of interest" description="A; required for its colocalization with lamins at the nuclear envelope" evidence="3">
    <location>
        <begin position="186"/>
        <end position="297"/>
    </location>
</feature>
<feature type="region of interest" description="Required for nuclear localization" evidence="3">
    <location>
        <begin position="336"/>
        <end position="444"/>
    </location>
</feature>
<feature type="region of interest" description="B; required for interaction with RAN-GTP" evidence="3">
    <location>
        <begin position="336"/>
        <end position="405"/>
    </location>
</feature>
<feature type="modified residue" description="Phosphoserine" evidence="2">
    <location>
        <position position="368"/>
    </location>
</feature>
<feature type="modified residue" description="Phosphoserine" evidence="2">
    <location>
        <position position="424"/>
    </location>
</feature>
<feature type="modified residue" description="Phosphoserine" evidence="2">
    <location>
        <position position="425"/>
    </location>
</feature>
<feature type="glycosylation site" description="N-linked (GlcNAc...) asparagine" evidence="4">
    <location>
        <position position="125"/>
    </location>
</feature>
<reference key="1">
    <citation type="submission" date="2004-11" db="EMBL/GenBank/DDBJ databases">
        <authorList>
            <consortium name="The German cDNA consortium"/>
        </authorList>
    </citation>
    <scope>NUCLEOTIDE SEQUENCE [LARGE SCALE MRNA]</scope>
    <source>
        <tissue>Kidney</tissue>
    </source>
</reference>
<evidence type="ECO:0000250" key="1">
    <source>
        <dbReference type="UniProtKB" id="B9X187"/>
    </source>
</evidence>
<evidence type="ECO:0000250" key="2">
    <source>
        <dbReference type="UniProtKB" id="O14524"/>
    </source>
</evidence>
<evidence type="ECO:0000250" key="3">
    <source>
        <dbReference type="UniProtKB" id="Q6ZQE4"/>
    </source>
</evidence>
<evidence type="ECO:0000255" key="4"/>
<evidence type="ECO:0000305" key="5"/>
<proteinExistence type="evidence at transcript level"/>
<protein>
    <recommendedName>
        <fullName>Nuclear envelope integral membrane protein 1</fullName>
    </recommendedName>
</protein>
<name>NEMP1_PONAB</name>
<keyword id="KW-0265">Erythrocyte maturation</keyword>
<keyword id="KW-0325">Glycoprotein</keyword>
<keyword id="KW-0472">Membrane</keyword>
<keyword id="KW-0539">Nucleus</keyword>
<keyword id="KW-0597">Phosphoprotein</keyword>
<keyword id="KW-1185">Reference proteome</keyword>
<keyword id="KW-0732">Signal</keyword>
<keyword id="KW-0812">Transmembrane</keyword>
<keyword id="KW-1133">Transmembrane helix</keyword>
<accession>Q5RDB4</accession>
<comment type="function">
    <text evidence="2 3">Together with EMD, contributes to nuclear envelope stiffness in germ cells (By similarity). Required for female fertility (By similarity). Essential for normal erythropoiesis (By similarity). Required for efficient nuclear envelope opening and enucleation during the late stages of erythroblast maturation (By similarity).</text>
</comment>
<comment type="subunit">
    <text evidence="1 2 3">Homooligomer. Interacts with RAN-GTP. Interacts with EMD (By similarity).</text>
</comment>
<comment type="subcellular location">
    <subcellularLocation>
        <location evidence="3">Nucleus inner membrane</location>
        <topology evidence="4">Multi-pass membrane protein</topology>
        <orientation evidence="1">Nucleoplasmic side</orientation>
    </subcellularLocation>
    <subcellularLocation>
        <location evidence="3">Nucleus envelope</location>
    </subcellularLocation>
    <text evidence="3">Colocalizes with lamins and RAN-GTP at the nuclear envelope.</text>
</comment>
<comment type="domain">
    <text evidence="1">The transmembrane domains are required and sufficient for its oligomerization.</text>
</comment>
<comment type="PTM">
    <text evidence="3">Phosphorylation may regulate its interaction with RAN-GTP.</text>
</comment>
<comment type="similarity">
    <text evidence="5">Belongs to the NEMP family.</text>
</comment>
<gene>
    <name type="primary">NEMP1</name>
    <name type="synonym">TMEM194A</name>
</gene>
<sequence>MAGGMKVAVSPAVGPGPWGSGVGGGGTVRLLLILSGCLVYGTAEIDVNVVMLQESQVCEKRASQQFCYTNVLIPKWHDIWTRIQIRVNSSKLVRVTQVENEQKLKELEQFSIWNFFSSFLKEKLNDTYVNVGLYSTKTCLKVEIIEKDTKYSVIVIRRFDPKLFLVFLLGLMLFFCGDLLSRSQIFYYSTGMSVGIVASLLIIIFILSKFMPKKSPIYVILVGGWSFSLYLIQLVFKNLQEIWRCYWQYLLSYILTVGFMSFAVCYKYGPLENERSIDLLTWTLQLMGLCFMYSGIQIPHIALAIIIIALCTKNLEYPIQWLYITYRKVCKAAEKPVPPRLLTEEEYRIQGEVETRKALEELREFCNSPDCSAWKTVSRIQSPKRFADFVEGSSHLTPNEVSVHEQEYGLGSIIAQDEIYEEASSEEEDSYSRCPAITQNNFLT</sequence>
<organism>
    <name type="scientific">Pongo abelii</name>
    <name type="common">Sumatran orangutan</name>
    <name type="synonym">Pongo pygmaeus abelii</name>
    <dbReference type="NCBI Taxonomy" id="9601"/>
    <lineage>
        <taxon>Eukaryota</taxon>
        <taxon>Metazoa</taxon>
        <taxon>Chordata</taxon>
        <taxon>Craniata</taxon>
        <taxon>Vertebrata</taxon>
        <taxon>Euteleostomi</taxon>
        <taxon>Mammalia</taxon>
        <taxon>Eutheria</taxon>
        <taxon>Euarchontoglires</taxon>
        <taxon>Primates</taxon>
        <taxon>Haplorrhini</taxon>
        <taxon>Catarrhini</taxon>
        <taxon>Hominidae</taxon>
        <taxon>Pongo</taxon>
    </lineage>
</organism>
<dbReference type="EMBL" id="CR858000">
    <property type="protein sequence ID" value="CAH90243.1"/>
    <property type="molecule type" value="mRNA"/>
</dbReference>
<dbReference type="RefSeq" id="NP_001125105.1">
    <property type="nucleotide sequence ID" value="NM_001131633.1"/>
</dbReference>
<dbReference type="FunCoup" id="Q5RDB4">
    <property type="interactions" value="1719"/>
</dbReference>
<dbReference type="STRING" id="9601.ENSPPYP00000005329"/>
<dbReference type="GlyCosmos" id="Q5RDB4">
    <property type="glycosylation" value="1 site, No reported glycans"/>
</dbReference>
<dbReference type="GeneID" id="100431552"/>
<dbReference type="KEGG" id="pon:100431552"/>
<dbReference type="CTD" id="23306"/>
<dbReference type="eggNOG" id="KOG3817">
    <property type="taxonomic scope" value="Eukaryota"/>
</dbReference>
<dbReference type="InParanoid" id="Q5RDB4"/>
<dbReference type="OrthoDB" id="509138at2759"/>
<dbReference type="Proteomes" id="UP000001595">
    <property type="component" value="Unplaced"/>
</dbReference>
<dbReference type="GO" id="GO:0005635">
    <property type="term" value="C:nuclear envelope"/>
    <property type="evidence" value="ECO:0000250"/>
    <property type="project" value="UniProtKB"/>
</dbReference>
<dbReference type="GO" id="GO:0005637">
    <property type="term" value="C:nuclear inner membrane"/>
    <property type="evidence" value="ECO:0007669"/>
    <property type="project" value="UniProtKB-SubCell"/>
</dbReference>
<dbReference type="GO" id="GO:0043131">
    <property type="term" value="P:erythrocyte enucleation"/>
    <property type="evidence" value="ECO:0000250"/>
    <property type="project" value="UniProtKB"/>
</dbReference>
<dbReference type="GO" id="GO:0043249">
    <property type="term" value="P:erythrocyte maturation"/>
    <property type="evidence" value="ECO:0000250"/>
    <property type="project" value="UniProtKB"/>
</dbReference>
<dbReference type="InterPro" id="IPR019358">
    <property type="entry name" value="NEMP_fam"/>
</dbReference>
<dbReference type="PANTHER" id="PTHR13598">
    <property type="entry name" value="AT07567P-RELATED"/>
    <property type="match status" value="1"/>
</dbReference>
<dbReference type="PANTHER" id="PTHR13598:SF2">
    <property type="entry name" value="NUCLEAR ENVELOPE INTEGRAL MEMBRANE PROTEIN 1"/>
    <property type="match status" value="1"/>
</dbReference>
<dbReference type="Pfam" id="PF10225">
    <property type="entry name" value="NEMP"/>
    <property type="match status" value="1"/>
</dbReference>